<proteinExistence type="inferred from homology"/>
<feature type="chain" id="PRO_0000172089" description="Putative pre-16S rRNA nuclease">
    <location>
        <begin position="1"/>
        <end position="151"/>
    </location>
</feature>
<keyword id="KW-0963">Cytoplasm</keyword>
<keyword id="KW-0378">Hydrolase</keyword>
<keyword id="KW-0540">Nuclease</keyword>
<keyword id="KW-1185">Reference proteome</keyword>
<keyword id="KW-0690">Ribosome biogenesis</keyword>
<sequence>MAEVPADSRGATYLGFDFGERNIGVAVGQSVTGTAAPLRTLRAQPSARLWAAISELIDQWLPAGLVVGLSHQQDGSENPITAPTLRFCRQLEGRYRLPVYTVDETLTTAESRTHFYQRRRRKSVEFEQVKDEMAAQLILQTWFSIDKASPR</sequence>
<gene>
    <name type="ordered locus">MCA2335</name>
</gene>
<reference key="1">
    <citation type="journal article" date="2004" name="PLoS Biol.">
        <title>Genomic insights into methanotrophy: the complete genome sequence of Methylococcus capsulatus (Bath).</title>
        <authorList>
            <person name="Ward N.L."/>
            <person name="Larsen O."/>
            <person name="Sakwa J."/>
            <person name="Bruseth L."/>
            <person name="Khouri H.M."/>
            <person name="Durkin A.S."/>
            <person name="Dimitrov G."/>
            <person name="Jiang L."/>
            <person name="Scanlan D."/>
            <person name="Kang K.H."/>
            <person name="Lewis M.R."/>
            <person name="Nelson K.E."/>
            <person name="Methe B.A."/>
            <person name="Wu M."/>
            <person name="Heidelberg J.F."/>
            <person name="Paulsen I.T."/>
            <person name="Fouts D.E."/>
            <person name="Ravel J."/>
            <person name="Tettelin H."/>
            <person name="Ren Q."/>
            <person name="Read T.D."/>
            <person name="DeBoy R.T."/>
            <person name="Seshadri R."/>
            <person name="Salzberg S.L."/>
            <person name="Jensen H.B."/>
            <person name="Birkeland N.K."/>
            <person name="Nelson W.C."/>
            <person name="Dodson R.J."/>
            <person name="Grindhaug S.H."/>
            <person name="Holt I.E."/>
            <person name="Eidhammer I."/>
            <person name="Jonasen I."/>
            <person name="Vanaken S."/>
            <person name="Utterback T.R."/>
            <person name="Feldblyum T.V."/>
            <person name="Fraser C.M."/>
            <person name="Lillehaug J.R."/>
            <person name="Eisen J.A."/>
        </authorList>
    </citation>
    <scope>NUCLEOTIDE SEQUENCE [LARGE SCALE GENOMIC DNA]</scope>
    <source>
        <strain>ATCC 33009 / NCIMB 11132 / Bath</strain>
    </source>
</reference>
<comment type="function">
    <text evidence="1">Could be a nuclease involved in processing of the 5'-end of pre-16S rRNA.</text>
</comment>
<comment type="subcellular location">
    <subcellularLocation>
        <location evidence="1">Cytoplasm</location>
    </subcellularLocation>
</comment>
<comment type="similarity">
    <text evidence="1">Belongs to the YqgF nuclease family.</text>
</comment>
<organism>
    <name type="scientific">Methylococcus capsulatus (strain ATCC 33009 / NCIMB 11132 / Bath)</name>
    <dbReference type="NCBI Taxonomy" id="243233"/>
    <lineage>
        <taxon>Bacteria</taxon>
        <taxon>Pseudomonadati</taxon>
        <taxon>Pseudomonadota</taxon>
        <taxon>Gammaproteobacteria</taxon>
        <taxon>Methylococcales</taxon>
        <taxon>Methylococcaceae</taxon>
        <taxon>Methylococcus</taxon>
    </lineage>
</organism>
<evidence type="ECO:0000255" key="1">
    <source>
        <dbReference type="HAMAP-Rule" id="MF_00651"/>
    </source>
</evidence>
<protein>
    <recommendedName>
        <fullName evidence="1">Putative pre-16S rRNA nuclease</fullName>
        <ecNumber evidence="1">3.1.-.-</ecNumber>
    </recommendedName>
</protein>
<accession>Q605E9</accession>
<name>YQGF_METCA</name>
<dbReference type="EC" id="3.1.-.-" evidence="1"/>
<dbReference type="EMBL" id="AE017282">
    <property type="protein sequence ID" value="AAU91520.1"/>
    <property type="molecule type" value="Genomic_DNA"/>
</dbReference>
<dbReference type="SMR" id="Q605E9"/>
<dbReference type="STRING" id="243233.MCA2335"/>
<dbReference type="GeneID" id="88224539"/>
<dbReference type="KEGG" id="mca:MCA2335"/>
<dbReference type="eggNOG" id="COG0816">
    <property type="taxonomic scope" value="Bacteria"/>
</dbReference>
<dbReference type="HOGENOM" id="CLU_098240_3_0_6"/>
<dbReference type="Proteomes" id="UP000006821">
    <property type="component" value="Chromosome"/>
</dbReference>
<dbReference type="GO" id="GO:0005829">
    <property type="term" value="C:cytosol"/>
    <property type="evidence" value="ECO:0007669"/>
    <property type="project" value="TreeGrafter"/>
</dbReference>
<dbReference type="GO" id="GO:0004518">
    <property type="term" value="F:nuclease activity"/>
    <property type="evidence" value="ECO:0007669"/>
    <property type="project" value="UniProtKB-KW"/>
</dbReference>
<dbReference type="GO" id="GO:0000967">
    <property type="term" value="P:rRNA 5'-end processing"/>
    <property type="evidence" value="ECO:0007669"/>
    <property type="project" value="UniProtKB-UniRule"/>
</dbReference>
<dbReference type="CDD" id="cd16964">
    <property type="entry name" value="YqgF"/>
    <property type="match status" value="1"/>
</dbReference>
<dbReference type="Gene3D" id="3.30.420.140">
    <property type="entry name" value="YqgF/RNase H-like domain"/>
    <property type="match status" value="1"/>
</dbReference>
<dbReference type="HAMAP" id="MF_00651">
    <property type="entry name" value="Nuclease_YqgF"/>
    <property type="match status" value="1"/>
</dbReference>
<dbReference type="InterPro" id="IPR012337">
    <property type="entry name" value="RNaseH-like_sf"/>
</dbReference>
<dbReference type="InterPro" id="IPR005227">
    <property type="entry name" value="YqgF"/>
</dbReference>
<dbReference type="InterPro" id="IPR006641">
    <property type="entry name" value="YqgF/RNaseH-like_dom"/>
</dbReference>
<dbReference type="InterPro" id="IPR037027">
    <property type="entry name" value="YqgF/RNaseH-like_dom_sf"/>
</dbReference>
<dbReference type="NCBIfam" id="TIGR00250">
    <property type="entry name" value="RNAse_H_YqgF"/>
    <property type="match status" value="1"/>
</dbReference>
<dbReference type="PANTHER" id="PTHR33317">
    <property type="entry name" value="POLYNUCLEOTIDYL TRANSFERASE, RIBONUCLEASE H-LIKE SUPERFAMILY PROTEIN"/>
    <property type="match status" value="1"/>
</dbReference>
<dbReference type="PANTHER" id="PTHR33317:SF4">
    <property type="entry name" value="POLYNUCLEOTIDYL TRANSFERASE, RIBONUCLEASE H-LIKE SUPERFAMILY PROTEIN"/>
    <property type="match status" value="1"/>
</dbReference>
<dbReference type="Pfam" id="PF03652">
    <property type="entry name" value="RuvX"/>
    <property type="match status" value="1"/>
</dbReference>
<dbReference type="SMART" id="SM00732">
    <property type="entry name" value="YqgFc"/>
    <property type="match status" value="1"/>
</dbReference>
<dbReference type="SUPFAM" id="SSF53098">
    <property type="entry name" value="Ribonuclease H-like"/>
    <property type="match status" value="1"/>
</dbReference>